<organism>
    <name type="scientific">Saccharomyces cerevisiae (strain JAY291)</name>
    <name type="common">Baker's yeast</name>
    <dbReference type="NCBI Taxonomy" id="574961"/>
    <lineage>
        <taxon>Eukaryota</taxon>
        <taxon>Fungi</taxon>
        <taxon>Dikarya</taxon>
        <taxon>Ascomycota</taxon>
        <taxon>Saccharomycotina</taxon>
        <taxon>Saccharomycetes</taxon>
        <taxon>Saccharomycetales</taxon>
        <taxon>Saccharomycetaceae</taxon>
        <taxon>Saccharomyces</taxon>
    </lineage>
</organism>
<name>BL1S4_YEAS2</name>
<accession>C7GMH9</accession>
<sequence>MQDNSSHSRESASAGDDPLGIDKLTVDYDYLLYKIRDYVQSIQLDTTELCKKQNEVMVNGIIENTIDKNIAKFKELLEKCDTLENHYEMLNQLAIITDTFKERIAEAVNNYNSLKKGASKSK</sequence>
<comment type="function">
    <text evidence="1">Component of the biogenesis of lysosome-related organelles complex-1 (BLOC-1), a complex that is involved in endosomal cargo sorting.</text>
</comment>
<comment type="subunit">
    <text evidence="1">Component of the biogenesis of lysosome-related organelles complex-1 (BLOC-1) composed of at least BLI1, BLS1, CNL1, KXD1, SNN1 and VAB2.</text>
</comment>
<comment type="subcellular location">
    <subcellularLocation>
        <location evidence="1">Cytoplasm</location>
    </subcellularLocation>
    <text evidence="1">Punctate pattern.</text>
</comment>
<comment type="similarity">
    <text evidence="4">Belongs to the BLOC1S4 family.</text>
</comment>
<reference key="1">
    <citation type="journal article" date="2009" name="Genome Res.">
        <title>Genome structure of a Saccharomyces cerevisiae strain widely used in bioethanol production.</title>
        <authorList>
            <person name="Argueso J.L."/>
            <person name="Carazzolle M.F."/>
            <person name="Mieczkowski P.A."/>
            <person name="Duarte F.M."/>
            <person name="Netto O.V.C."/>
            <person name="Missawa S.K."/>
            <person name="Galzerani F."/>
            <person name="Costa G.G.L."/>
            <person name="Vidal R.O."/>
            <person name="Noronha M.F."/>
            <person name="Dominska M."/>
            <person name="Andrietta M.G.S."/>
            <person name="Andrietta S.R."/>
            <person name="Cunha A.F."/>
            <person name="Gomes L.H."/>
            <person name="Tavares F.C.A."/>
            <person name="Alcarde A.R."/>
            <person name="Dietrich F.S."/>
            <person name="McCusker J.H."/>
            <person name="Petes T.D."/>
            <person name="Pereira G.A.G."/>
        </authorList>
    </citation>
    <scope>NUCLEOTIDE SEQUENCE [LARGE SCALE GENOMIC DNA]</scope>
    <source>
        <strain>JAY291</strain>
    </source>
</reference>
<gene>
    <name type="primary">CLN1</name>
    <name type="ORF">C1Q_01440</name>
</gene>
<proteinExistence type="inferred from homology"/>
<keyword id="KW-0175">Coiled coil</keyword>
<keyword id="KW-0963">Cytoplasm</keyword>
<keyword id="KW-0813">Transport</keyword>
<evidence type="ECO:0000250" key="1"/>
<evidence type="ECO:0000255" key="2"/>
<evidence type="ECO:0000256" key="3">
    <source>
        <dbReference type="SAM" id="MobiDB-lite"/>
    </source>
</evidence>
<evidence type="ECO:0000305" key="4"/>
<feature type="chain" id="PRO_0000410647" description="Biogenesis of lysosome-related organelles complex 1 subunit CNL1">
    <location>
        <begin position="1"/>
        <end position="122"/>
    </location>
</feature>
<feature type="region of interest" description="Disordered" evidence="3">
    <location>
        <begin position="1"/>
        <end position="21"/>
    </location>
</feature>
<feature type="coiled-coil region" evidence="2">
    <location>
        <begin position="63"/>
        <end position="95"/>
    </location>
</feature>
<feature type="compositionally biased region" description="Basic and acidic residues" evidence="3">
    <location>
        <begin position="1"/>
        <end position="10"/>
    </location>
</feature>
<dbReference type="EMBL" id="ACFL01000057">
    <property type="protein sequence ID" value="EEU07996.1"/>
    <property type="molecule type" value="Genomic_DNA"/>
</dbReference>
<dbReference type="SMR" id="C7GMH9"/>
<dbReference type="Proteomes" id="UP000008073">
    <property type="component" value="Unassembled WGS sequence"/>
</dbReference>
<dbReference type="GO" id="GO:0031083">
    <property type="term" value="C:BLOC-1 complex"/>
    <property type="evidence" value="ECO:0007669"/>
    <property type="project" value="InterPro"/>
</dbReference>
<dbReference type="GO" id="GO:0005737">
    <property type="term" value="C:cytoplasm"/>
    <property type="evidence" value="ECO:0007669"/>
    <property type="project" value="UniProtKB-SubCell"/>
</dbReference>
<dbReference type="GO" id="GO:0007032">
    <property type="term" value="P:endosome organization"/>
    <property type="evidence" value="ECO:0007669"/>
    <property type="project" value="TreeGrafter"/>
</dbReference>
<dbReference type="CDD" id="cd24144">
    <property type="entry name" value="BLOC1_CNL1"/>
    <property type="match status" value="1"/>
</dbReference>
<dbReference type="InterPro" id="IPR034455">
    <property type="entry name" value="CNL1"/>
</dbReference>
<dbReference type="PANTHER" id="PTHR39145">
    <property type="entry name" value="BIOGENESIS OF LYSOSOME-RELATED ORGANELLES COMPLEX 1 SUBUNIT CNL1"/>
    <property type="match status" value="1"/>
</dbReference>
<dbReference type="PANTHER" id="PTHR39145:SF1">
    <property type="entry name" value="BIOGENESIS OF LYSOSOME-RELATED ORGANELLES COMPLEX 1 SUBUNIT CNL1"/>
    <property type="match status" value="1"/>
</dbReference>
<protein>
    <recommendedName>
        <fullName>Biogenesis of lysosome-related organelles complex 1 subunit CNL1</fullName>
        <shortName>BLOC-1 subunit CNL1</shortName>
    </recommendedName>
    <alternativeName>
        <fullName>CNO-like protein 1</fullName>
    </alternativeName>
</protein>